<gene>
    <name type="primary">ARI7</name>
    <name type="ordered locus">At2g31510</name>
    <name type="ORF">T9H9.3</name>
</gene>
<accession>Q84RR0</accession>
<accession>Q9SIQ6</accession>
<sequence length="562" mass="63978">MDSEEDMLDAHDMESGEDDFYSGGTDDCNDSDDGEPDYGFVEEDADDSAMIASHRSQKNFCVLREEDIRRHQMDNIERVSVVLSITEVEASILLRHFHWSVGRVHDEWFADEERVRKTVGILESHVVPPSDDSELTCGICFDSYPPEKIASVSCGHPFCTTCWTGYISTTINDGPGCLMLRCPDPSCLAAVGHDMVDKLASEDEKEKYNRYFLRSYIEDNRKMKWCPAPGCDFAIDFVAGSGNYDVSCLCSFSFCWNCTEEAHRPVDCSTVSKWILKNSAESENMNWILANSKPCPRCKRPIEKNQGCMHMTCTPPCKYEFCWLCLGAWMDHGERTGGFYACNRYEVAKQEGQYDETERRREMAKNSLERYTHYYERWASNQTSRQKAMADLQQAQMQNLEKLSDKQCTPESQLKFILEAWLQIIECRRVLKWTYAYGYYLPEHEHAKRQFFEYLQGEAESGLERLHQCVEKDLVQFLIAEGPSKDFNDFRTKLAGLTSVTKNYFENLVKALENGLADVDSHAACSSKSTSSKSTGCSSKTRGKGKGSSRTGGSSRNPDDNL</sequence>
<dbReference type="EC" id="2.3.2.31" evidence="2"/>
<dbReference type="EMBL" id="AJ510210">
    <property type="protein sequence ID" value="CAD52889.1"/>
    <property type="molecule type" value="Genomic_DNA"/>
</dbReference>
<dbReference type="EMBL" id="AC007071">
    <property type="protein sequence ID" value="AAD24830.1"/>
    <property type="status" value="ALT_SEQ"/>
    <property type="molecule type" value="Genomic_DNA"/>
</dbReference>
<dbReference type="EMBL" id="CP002685">
    <property type="protein sequence ID" value="AEC08556.1"/>
    <property type="molecule type" value="Genomic_DNA"/>
</dbReference>
<dbReference type="EMBL" id="BX820609">
    <property type="status" value="NOT_ANNOTATED_CDS"/>
    <property type="molecule type" value="mRNA"/>
</dbReference>
<dbReference type="PIR" id="F84721">
    <property type="entry name" value="F84721"/>
</dbReference>
<dbReference type="RefSeq" id="NP_180709.3">
    <property type="nucleotide sequence ID" value="NM_128708.5"/>
</dbReference>
<dbReference type="SMR" id="Q84RR0"/>
<dbReference type="FunCoup" id="Q84RR0">
    <property type="interactions" value="1243"/>
</dbReference>
<dbReference type="STRING" id="3702.Q84RR0"/>
<dbReference type="PaxDb" id="3702-AT2G31510.1"/>
<dbReference type="ProteomicsDB" id="241058"/>
<dbReference type="EnsemblPlants" id="AT2G31510.1">
    <property type="protein sequence ID" value="AT2G31510.1"/>
    <property type="gene ID" value="AT2G31510"/>
</dbReference>
<dbReference type="GeneID" id="817709"/>
<dbReference type="Gramene" id="AT2G31510.1">
    <property type="protein sequence ID" value="AT2G31510.1"/>
    <property type="gene ID" value="AT2G31510"/>
</dbReference>
<dbReference type="KEGG" id="ath:AT2G31510"/>
<dbReference type="Araport" id="AT2G31510"/>
<dbReference type="TAIR" id="AT2G31510">
    <property type="gene designation" value="ARI7"/>
</dbReference>
<dbReference type="eggNOG" id="KOG1815">
    <property type="taxonomic scope" value="Eukaryota"/>
</dbReference>
<dbReference type="HOGENOM" id="CLU_009823_3_1_1"/>
<dbReference type="InParanoid" id="Q84RR0"/>
<dbReference type="OrthoDB" id="10009520at2759"/>
<dbReference type="PhylomeDB" id="Q84RR0"/>
<dbReference type="UniPathway" id="UPA00143"/>
<dbReference type="PRO" id="PR:Q84RR0"/>
<dbReference type="Proteomes" id="UP000006548">
    <property type="component" value="Chromosome 2"/>
</dbReference>
<dbReference type="ExpressionAtlas" id="Q84RR0">
    <property type="expression patterns" value="baseline and differential"/>
</dbReference>
<dbReference type="GO" id="GO:0004842">
    <property type="term" value="F:ubiquitin-protein transferase activity"/>
    <property type="evidence" value="ECO:0007669"/>
    <property type="project" value="InterPro"/>
</dbReference>
<dbReference type="GO" id="GO:0008270">
    <property type="term" value="F:zinc ion binding"/>
    <property type="evidence" value="ECO:0007669"/>
    <property type="project" value="UniProtKB-KW"/>
</dbReference>
<dbReference type="GO" id="GO:0016567">
    <property type="term" value="P:protein ubiquitination"/>
    <property type="evidence" value="ECO:0007669"/>
    <property type="project" value="UniProtKB-UniPathway"/>
</dbReference>
<dbReference type="CDD" id="cd20346">
    <property type="entry name" value="BRcat_RBR_ANKIB1"/>
    <property type="match status" value="1"/>
</dbReference>
<dbReference type="CDD" id="cd22583">
    <property type="entry name" value="Rcat_RBR_ARI7-like"/>
    <property type="match status" value="1"/>
</dbReference>
<dbReference type="CDD" id="cd23141">
    <property type="entry name" value="RING-HC_ARI6-like"/>
    <property type="match status" value="1"/>
</dbReference>
<dbReference type="FunFam" id="1.20.120.1750:FF:000005">
    <property type="entry name" value="RBR-type E3 ubiquitin transferase"/>
    <property type="match status" value="1"/>
</dbReference>
<dbReference type="FunFam" id="3.30.40.10:FF:000019">
    <property type="entry name" value="RBR-type E3 ubiquitin transferase"/>
    <property type="match status" value="1"/>
</dbReference>
<dbReference type="Gene3D" id="1.20.120.1750">
    <property type="match status" value="1"/>
</dbReference>
<dbReference type="Gene3D" id="3.30.40.10">
    <property type="entry name" value="Zinc/RING finger domain, C3HC4 (zinc finger)"/>
    <property type="match status" value="1"/>
</dbReference>
<dbReference type="InterPro" id="IPR045840">
    <property type="entry name" value="Ariadne"/>
</dbReference>
<dbReference type="InterPro" id="IPR048962">
    <property type="entry name" value="ARIH1-like_UBL"/>
</dbReference>
<dbReference type="InterPro" id="IPR031127">
    <property type="entry name" value="E3_UB_ligase_RBR"/>
</dbReference>
<dbReference type="InterPro" id="IPR002867">
    <property type="entry name" value="IBR_dom"/>
</dbReference>
<dbReference type="InterPro" id="IPR044066">
    <property type="entry name" value="TRIAD_supradom"/>
</dbReference>
<dbReference type="InterPro" id="IPR001841">
    <property type="entry name" value="Znf_RING"/>
</dbReference>
<dbReference type="InterPro" id="IPR013083">
    <property type="entry name" value="Znf_RING/FYVE/PHD"/>
</dbReference>
<dbReference type="PANTHER" id="PTHR11685">
    <property type="entry name" value="RBR FAMILY RING FINGER AND IBR DOMAIN-CONTAINING"/>
    <property type="match status" value="1"/>
</dbReference>
<dbReference type="Pfam" id="PF19422">
    <property type="entry name" value="Ariadne"/>
    <property type="match status" value="1"/>
</dbReference>
<dbReference type="Pfam" id="PF01485">
    <property type="entry name" value="IBR"/>
    <property type="match status" value="1"/>
</dbReference>
<dbReference type="Pfam" id="PF22191">
    <property type="entry name" value="IBR_1"/>
    <property type="match status" value="1"/>
</dbReference>
<dbReference type="Pfam" id="PF21235">
    <property type="entry name" value="UBA_ARI1"/>
    <property type="match status" value="1"/>
</dbReference>
<dbReference type="SMART" id="SM00647">
    <property type="entry name" value="IBR"/>
    <property type="match status" value="2"/>
</dbReference>
<dbReference type="SUPFAM" id="SSF57850">
    <property type="entry name" value="RING/U-box"/>
    <property type="match status" value="3"/>
</dbReference>
<dbReference type="PROSITE" id="PS51873">
    <property type="entry name" value="TRIAD"/>
    <property type="match status" value="1"/>
</dbReference>
<dbReference type="PROSITE" id="PS50089">
    <property type="entry name" value="ZF_RING_2"/>
    <property type="match status" value="1"/>
</dbReference>
<comment type="function">
    <text evidence="1 5">Might act as an E3 ubiquitin-protein ligase, or as part of E3 complex, which accepts ubiquitin from specific E2 ubiquitin-conjugating enzymes and then transfers it to substrates.</text>
</comment>
<comment type="catalytic activity">
    <reaction evidence="2">
        <text>[E2 ubiquitin-conjugating enzyme]-S-ubiquitinyl-L-cysteine + [acceptor protein]-L-lysine = [E2 ubiquitin-conjugating enzyme]-L-cysteine + [acceptor protein]-N(6)-ubiquitinyl-L-lysine.</text>
        <dbReference type="EC" id="2.3.2.31"/>
    </reaction>
</comment>
<comment type="cofactor">
    <cofactor evidence="7">
        <name>Zn(2+)</name>
        <dbReference type="ChEBI" id="CHEBI:29105"/>
    </cofactor>
    <text evidence="7">Binds 4 Zn(2+) ions per subunit.</text>
</comment>
<comment type="pathway">
    <text>Protein modification; protein ubiquitination.</text>
</comment>
<comment type="tissue specificity">
    <text evidence="6">Ubiquitous.</text>
</comment>
<comment type="domain">
    <text evidence="2">Members of the RBR family are atypical E3 ligases. They interact with the E2 conjugating enzyme UBE2L3 and function like HECT-type E3 enzymes: they bind E2s via the first RING-type zinc finger, but require an obligate trans-thiolation step during the ubiquitin transfer, requiring a conserved active site Cys residue in the second RING-type zinc finger. The active site probably forms a thioester intermediate with ubiquitin taken from the active-site cysteine of the E2 before ultimately transferring it to a Lys residue on the substrate.</text>
</comment>
<comment type="similarity">
    <text evidence="7">Belongs to the RBR family. Ariadne subfamily.</text>
</comment>
<comment type="sequence caution" evidence="7">
    <conflict type="erroneous gene model prediction">
        <sequence resource="EMBL-CDS" id="AAD24830"/>
    </conflict>
</comment>
<evidence type="ECO:0000250" key="1"/>
<evidence type="ECO:0000250" key="2">
    <source>
        <dbReference type="UniProtKB" id="Q9Y4X5"/>
    </source>
</evidence>
<evidence type="ECO:0000255" key="3">
    <source>
        <dbReference type="PROSITE-ProRule" id="PRU01221"/>
    </source>
</evidence>
<evidence type="ECO:0000256" key="4">
    <source>
        <dbReference type="SAM" id="MobiDB-lite"/>
    </source>
</evidence>
<evidence type="ECO:0000269" key="5">
    <source>
    </source>
</evidence>
<evidence type="ECO:0000269" key="6">
    <source>
    </source>
</evidence>
<evidence type="ECO:0000305" key="7"/>
<proteinExistence type="evidence at transcript level"/>
<keyword id="KW-0479">Metal-binding</keyword>
<keyword id="KW-1185">Reference proteome</keyword>
<keyword id="KW-0677">Repeat</keyword>
<keyword id="KW-0808">Transferase</keyword>
<keyword id="KW-0833">Ubl conjugation pathway</keyword>
<keyword id="KW-0862">Zinc</keyword>
<keyword id="KW-0863">Zinc-finger</keyword>
<name>ARI7_ARATH</name>
<protein>
    <recommendedName>
        <fullName>Probable E3 ubiquitin-protein ligase ARI7</fullName>
        <ecNumber evidence="2">2.3.2.31</ecNumber>
    </recommendedName>
    <alternativeName>
        <fullName>ARIADNE-like protein ARI7</fullName>
    </alternativeName>
    <alternativeName>
        <fullName>Protein ariadne homolog 7</fullName>
    </alternativeName>
    <alternativeName>
        <fullName evidence="7">RING-type E3 ubiquitin transferase ARI7</fullName>
    </alternativeName>
</protein>
<reference key="1">
    <citation type="journal article" date="2003" name="Plant Physiol.">
        <title>Identification and characterization of the ARIADNE gene family in Arabidopsis. A group of putative E3 ligases.</title>
        <authorList>
            <person name="Mladek C."/>
            <person name="Guger K."/>
            <person name="Hauser M.-T."/>
        </authorList>
    </citation>
    <scope>NUCLEOTIDE SEQUENCE [GENOMIC DNA]</scope>
    <scope>TISSUE SPECIFICITY</scope>
    <scope>NOMENCLATURE</scope>
    <scope>GENE FAMILY</scope>
    <source>
        <strain>cv. Columbia</strain>
    </source>
</reference>
<reference key="2">
    <citation type="journal article" date="1999" name="Nature">
        <title>Sequence and analysis of chromosome 2 of the plant Arabidopsis thaliana.</title>
        <authorList>
            <person name="Lin X."/>
            <person name="Kaul S."/>
            <person name="Rounsley S.D."/>
            <person name="Shea T.P."/>
            <person name="Benito M.-I."/>
            <person name="Town C.D."/>
            <person name="Fujii C.Y."/>
            <person name="Mason T.M."/>
            <person name="Bowman C.L."/>
            <person name="Barnstead M.E."/>
            <person name="Feldblyum T.V."/>
            <person name="Buell C.R."/>
            <person name="Ketchum K.A."/>
            <person name="Lee J.J."/>
            <person name="Ronning C.M."/>
            <person name="Koo H.L."/>
            <person name="Moffat K.S."/>
            <person name="Cronin L.A."/>
            <person name="Shen M."/>
            <person name="Pai G."/>
            <person name="Van Aken S."/>
            <person name="Umayam L."/>
            <person name="Tallon L.J."/>
            <person name="Gill J.E."/>
            <person name="Adams M.D."/>
            <person name="Carrera A.J."/>
            <person name="Creasy T.H."/>
            <person name="Goodman H.M."/>
            <person name="Somerville C.R."/>
            <person name="Copenhaver G.P."/>
            <person name="Preuss D."/>
            <person name="Nierman W.C."/>
            <person name="White O."/>
            <person name="Eisen J.A."/>
            <person name="Salzberg S.L."/>
            <person name="Fraser C.M."/>
            <person name="Venter J.C."/>
        </authorList>
    </citation>
    <scope>NUCLEOTIDE SEQUENCE [LARGE SCALE GENOMIC DNA]</scope>
    <source>
        <strain>cv. Columbia</strain>
    </source>
</reference>
<reference key="3">
    <citation type="journal article" date="2017" name="Plant J.">
        <title>Araport11: a complete reannotation of the Arabidopsis thaliana reference genome.</title>
        <authorList>
            <person name="Cheng C.Y."/>
            <person name="Krishnakumar V."/>
            <person name="Chan A.P."/>
            <person name="Thibaud-Nissen F."/>
            <person name="Schobel S."/>
            <person name="Town C.D."/>
        </authorList>
    </citation>
    <scope>GENOME REANNOTATION</scope>
    <source>
        <strain>cv. Columbia</strain>
    </source>
</reference>
<reference key="4">
    <citation type="journal article" date="2004" name="Genome Res.">
        <title>Whole genome sequence comparisons and 'full-length' cDNA sequences: a combined approach to evaluate and improve Arabidopsis genome annotation.</title>
        <authorList>
            <person name="Castelli V."/>
            <person name="Aury J.-M."/>
            <person name="Jaillon O."/>
            <person name="Wincker P."/>
            <person name="Clepet C."/>
            <person name="Menard M."/>
            <person name="Cruaud C."/>
            <person name="Quetier F."/>
            <person name="Scarpelli C."/>
            <person name="Schaechter V."/>
            <person name="Temple G."/>
            <person name="Caboche M."/>
            <person name="Weissenbach J."/>
            <person name="Salanoubat M."/>
        </authorList>
    </citation>
    <scope>NUCLEOTIDE SEQUENCE [LARGE SCALE MRNA] OF 304-562</scope>
    <source>
        <strain>cv. Columbia</strain>
    </source>
</reference>
<reference key="5">
    <citation type="journal article" date="2002" name="Mol. Biol. Evol.">
        <title>Comparative genomics of the RBR family, including the Parkinson's disease-related gene parkin and the genes of the ariadne subfamily.</title>
        <authorList>
            <person name="Marin I."/>
            <person name="Ferrus A."/>
        </authorList>
    </citation>
    <scope>FUNCTION</scope>
</reference>
<feature type="chain" id="PRO_0000356200" description="Probable E3 ubiquitin-protein ligase ARI7">
    <location>
        <begin position="1"/>
        <end position="562"/>
    </location>
</feature>
<feature type="zinc finger region" description="RING-type 1" evidence="3">
    <location>
        <begin position="137"/>
        <end position="187"/>
    </location>
</feature>
<feature type="zinc finger region" description="IBR-type" evidence="3">
    <location>
        <begin position="206"/>
        <end position="268"/>
    </location>
</feature>
<feature type="zinc finger region" description="RING-type 2; atypical" evidence="3">
    <location>
        <begin position="295"/>
        <end position="325"/>
    </location>
</feature>
<feature type="region of interest" description="Disordered" evidence="4">
    <location>
        <begin position="1"/>
        <end position="39"/>
    </location>
</feature>
<feature type="region of interest" description="TRIAD supradomain" evidence="3">
    <location>
        <begin position="133"/>
        <end position="346"/>
    </location>
</feature>
<feature type="region of interest" description="Disordered" evidence="4">
    <location>
        <begin position="524"/>
        <end position="562"/>
    </location>
</feature>
<feature type="compositionally biased region" description="Acidic residues" evidence="4">
    <location>
        <begin position="27"/>
        <end position="39"/>
    </location>
</feature>
<feature type="compositionally biased region" description="Low complexity" evidence="4">
    <location>
        <begin position="525"/>
        <end position="540"/>
    </location>
</feature>
<feature type="active site" evidence="3">
    <location>
        <position position="308"/>
    </location>
</feature>
<feature type="binding site" evidence="3">
    <location>
        <position position="137"/>
    </location>
    <ligand>
        <name>Zn(2+)</name>
        <dbReference type="ChEBI" id="CHEBI:29105"/>
        <label>1</label>
    </ligand>
</feature>
<feature type="binding site" evidence="3">
    <location>
        <position position="140"/>
    </location>
    <ligand>
        <name>Zn(2+)</name>
        <dbReference type="ChEBI" id="CHEBI:29105"/>
        <label>1</label>
    </ligand>
</feature>
<feature type="binding site" evidence="3">
    <location>
        <position position="154"/>
    </location>
    <ligand>
        <name>Zn(2+)</name>
        <dbReference type="ChEBI" id="CHEBI:29105"/>
        <label>2</label>
    </ligand>
</feature>
<feature type="binding site" evidence="3">
    <location>
        <position position="156"/>
    </location>
    <ligand>
        <name>Zn(2+)</name>
        <dbReference type="ChEBI" id="CHEBI:29105"/>
        <label>2</label>
    </ligand>
</feature>
<feature type="binding site" evidence="3">
    <location>
        <position position="159"/>
    </location>
    <ligand>
        <name>Zn(2+)</name>
        <dbReference type="ChEBI" id="CHEBI:29105"/>
        <label>1</label>
    </ligand>
</feature>
<feature type="binding site" evidence="3">
    <location>
        <position position="162"/>
    </location>
    <ligand>
        <name>Zn(2+)</name>
        <dbReference type="ChEBI" id="CHEBI:29105"/>
        <label>1</label>
    </ligand>
</feature>
<feature type="binding site" evidence="3">
    <location>
        <position position="182"/>
    </location>
    <ligand>
        <name>Zn(2+)</name>
        <dbReference type="ChEBI" id="CHEBI:29105"/>
        <label>2</label>
    </ligand>
</feature>
<feature type="binding site" evidence="3">
    <location>
        <position position="187"/>
    </location>
    <ligand>
        <name>Zn(2+)</name>
        <dbReference type="ChEBI" id="CHEBI:29105"/>
        <label>2</label>
    </ligand>
</feature>
<feature type="binding site" evidence="3">
    <location>
        <position position="226"/>
    </location>
    <ligand>
        <name>Zn(2+)</name>
        <dbReference type="ChEBI" id="CHEBI:29105"/>
        <label>3</label>
    </ligand>
</feature>
<feature type="binding site" evidence="3">
    <location>
        <position position="231"/>
    </location>
    <ligand>
        <name>Zn(2+)</name>
        <dbReference type="ChEBI" id="CHEBI:29105"/>
        <label>3</label>
    </ligand>
</feature>
<feature type="binding site" evidence="3">
    <location>
        <position position="248"/>
    </location>
    <ligand>
        <name>Zn(2+)</name>
        <dbReference type="ChEBI" id="CHEBI:29105"/>
        <label>3</label>
    </ligand>
</feature>
<feature type="binding site" evidence="3">
    <location>
        <position position="250"/>
    </location>
    <ligand>
        <name>Zn(2+)</name>
        <dbReference type="ChEBI" id="CHEBI:29105"/>
        <label>3</label>
    </ligand>
</feature>
<feature type="binding site" evidence="3">
    <location>
        <position position="255"/>
    </location>
    <ligand>
        <name>Zn(2+)</name>
        <dbReference type="ChEBI" id="CHEBI:29105"/>
        <label>4</label>
    </ligand>
</feature>
<feature type="binding site" evidence="3">
    <location>
        <position position="258"/>
    </location>
    <ligand>
        <name>Zn(2+)</name>
        <dbReference type="ChEBI" id="CHEBI:29105"/>
        <label>4</label>
    </ligand>
</feature>
<feature type="binding site" evidence="3">
    <location>
        <position position="263"/>
    </location>
    <ligand>
        <name>Zn(2+)</name>
        <dbReference type="ChEBI" id="CHEBI:29105"/>
        <label>4</label>
    </ligand>
</feature>
<feature type="binding site" evidence="3">
    <location>
        <position position="268"/>
    </location>
    <ligand>
        <name>Zn(2+)</name>
        <dbReference type="ChEBI" id="CHEBI:29105"/>
        <label>4</label>
    </ligand>
</feature>
<feature type="binding site" evidence="3">
    <location>
        <position position="295"/>
    </location>
    <ligand>
        <name>Zn(2+)</name>
        <dbReference type="ChEBI" id="CHEBI:29105"/>
        <label>5</label>
    </ligand>
</feature>
<feature type="binding site" evidence="3">
    <location>
        <position position="298"/>
    </location>
    <ligand>
        <name>Zn(2+)</name>
        <dbReference type="ChEBI" id="CHEBI:29105"/>
        <label>5</label>
    </ligand>
</feature>
<feature type="binding site" evidence="3">
    <location>
        <position position="313"/>
    </location>
    <ligand>
        <name>Zn(2+)</name>
        <dbReference type="ChEBI" id="CHEBI:29105"/>
        <label>5</label>
    </ligand>
</feature>
<feature type="binding site" evidence="3">
    <location>
        <position position="317"/>
    </location>
    <ligand>
        <name>Zn(2+)</name>
        <dbReference type="ChEBI" id="CHEBI:29105"/>
        <label>5</label>
    </ligand>
</feature>
<feature type="binding site" evidence="3">
    <location>
        <position position="322"/>
    </location>
    <ligand>
        <name>Zn(2+)</name>
        <dbReference type="ChEBI" id="CHEBI:29105"/>
        <label>6</label>
    </ligand>
</feature>
<feature type="binding site" evidence="3">
    <location>
        <position position="325"/>
    </location>
    <ligand>
        <name>Zn(2+)</name>
        <dbReference type="ChEBI" id="CHEBI:29105"/>
        <label>6</label>
    </ligand>
</feature>
<feature type="binding site" evidence="3">
    <location>
        <position position="332"/>
    </location>
    <ligand>
        <name>Zn(2+)</name>
        <dbReference type="ChEBI" id="CHEBI:29105"/>
        <label>6</label>
    </ligand>
</feature>
<feature type="binding site" evidence="3">
    <location>
        <position position="342"/>
    </location>
    <ligand>
        <name>Zn(2+)</name>
        <dbReference type="ChEBI" id="CHEBI:29105"/>
        <label>6</label>
    </ligand>
</feature>
<feature type="sequence conflict" description="In Ref. 4; BX820609." evidence="7" ref="4">
    <original>N</original>
    <variation>Y</variation>
    <location>
        <position position="343"/>
    </location>
</feature>
<feature type="sequence conflict" description="In Ref. 4; BX820609." evidence="7" ref="4">
    <original>K</original>
    <variation>I</variation>
    <location>
        <position position="432"/>
    </location>
</feature>
<feature type="sequence conflict" description="In Ref. 4; BX820609." evidence="7" ref="4">
    <original>Q</original>
    <variation>L</variation>
    <location>
        <position position="456"/>
    </location>
</feature>
<feature type="sequence conflict" description="In Ref. 4; BX820609." evidence="7" ref="4">
    <original>S</original>
    <variation>C</variation>
    <location>
        <position position="499"/>
    </location>
</feature>
<organism>
    <name type="scientific">Arabidopsis thaliana</name>
    <name type="common">Mouse-ear cress</name>
    <dbReference type="NCBI Taxonomy" id="3702"/>
    <lineage>
        <taxon>Eukaryota</taxon>
        <taxon>Viridiplantae</taxon>
        <taxon>Streptophyta</taxon>
        <taxon>Embryophyta</taxon>
        <taxon>Tracheophyta</taxon>
        <taxon>Spermatophyta</taxon>
        <taxon>Magnoliopsida</taxon>
        <taxon>eudicotyledons</taxon>
        <taxon>Gunneridae</taxon>
        <taxon>Pentapetalae</taxon>
        <taxon>rosids</taxon>
        <taxon>malvids</taxon>
        <taxon>Brassicales</taxon>
        <taxon>Brassicaceae</taxon>
        <taxon>Camelineae</taxon>
        <taxon>Arabidopsis</taxon>
    </lineage>
</organism>